<name>SECA_CUPNH</name>
<sequence length="925" mass="104599">MITGLLKKVFGSRNERLIKQYRRTVAQINALEPKFEQLSDDELRGMTETFRQRHAGGESLEALLPEAFAVCREASKRVMKMRHFDVQLIGGMVLNDNKIAEMRTGEGKTLTATLAVYLNAITGQGVHVVTVNDYLAQRDAEWMGRLYNFLGLSVGVNLSQMPHDAKQAAYNSDITYGTNNEFGFDYLRDNMVYDPSQRVQRPLNYAIVDEVDSILIDEARTPLIISGQAENQTDLYQRMNGIPKLLERQIGEEKADGTGVEKPGDYYVDEKGHQVYLTEAGHEKAEEILSQQGLIGEGESLYAPQNITLMHHLYAALRAHSLFHRDQHYVVQNDEVVIVDEFTGRLMTGRRWSDGLHQAVEAKEGVTVQQENQTLATITFQNYFRMYNKLAGMTGTADTEAYEFQEIYGLEVVVIPTNRPAQRKDQQDQIYKTGKERYDAVVRDIRDCYERGQPVLVGTTSIETSEYLSGLLDREQLPHQVLNAKQHAREAEIVAQAGRPKMITIATNMAGRGTDIVLGGNVEKQSGFIEADPNLSDAEKAARIKQLEDEWHSLHEQVKAAGGLHIVGTERHESRRIDNQLRGRAGRQGDPGSSRFYLSLDDQLLRIFAGDRVRAIMERLKMPEGEPIEAGIVTRSIESAQRKVEGRNFDIRKQLLQYDDVANDQRKEIYKLRNDVLEAQDVGDMVTNLRESVLVELFRDHVPADTMEEQWNISGLETRLREDWGLEVPLAQTIEGAQSIEDEELLNLIMKAAAERYDGKVAMVGRESFAGFERSVMLQSIDTHWREHLAALDHLRQGIHLRGYAQKDPKQEYKRESFELFARLLDLIKNEVTRVTFNVQIQSPEELEQASEEIEEGLSHLENIQYKHDEFAEGREPVEEAPSPRTGAAMAAAELALAGMPKVGRNDPCPCGSGKKFKQCHGRLS</sequence>
<accession>Q0K6N3</accession>
<dbReference type="EC" id="7.4.2.8" evidence="1"/>
<dbReference type="EMBL" id="AM260479">
    <property type="protein sequence ID" value="CAJ94338.1"/>
    <property type="molecule type" value="Genomic_DNA"/>
</dbReference>
<dbReference type="RefSeq" id="WP_010814760.1">
    <property type="nucleotide sequence ID" value="NZ_CP039287.1"/>
</dbReference>
<dbReference type="SMR" id="Q0K6N3"/>
<dbReference type="STRING" id="381666.H16_A3264"/>
<dbReference type="KEGG" id="reh:H16_A3264"/>
<dbReference type="eggNOG" id="COG0653">
    <property type="taxonomic scope" value="Bacteria"/>
</dbReference>
<dbReference type="HOGENOM" id="CLU_005314_3_0_4"/>
<dbReference type="OrthoDB" id="9805579at2"/>
<dbReference type="Proteomes" id="UP000008210">
    <property type="component" value="Chromosome 1"/>
</dbReference>
<dbReference type="GO" id="GO:0031522">
    <property type="term" value="C:cell envelope Sec protein transport complex"/>
    <property type="evidence" value="ECO:0007669"/>
    <property type="project" value="TreeGrafter"/>
</dbReference>
<dbReference type="GO" id="GO:0005829">
    <property type="term" value="C:cytosol"/>
    <property type="evidence" value="ECO:0007669"/>
    <property type="project" value="TreeGrafter"/>
</dbReference>
<dbReference type="GO" id="GO:0005886">
    <property type="term" value="C:plasma membrane"/>
    <property type="evidence" value="ECO:0007669"/>
    <property type="project" value="UniProtKB-SubCell"/>
</dbReference>
<dbReference type="GO" id="GO:0005524">
    <property type="term" value="F:ATP binding"/>
    <property type="evidence" value="ECO:0007669"/>
    <property type="project" value="UniProtKB-UniRule"/>
</dbReference>
<dbReference type="GO" id="GO:0046872">
    <property type="term" value="F:metal ion binding"/>
    <property type="evidence" value="ECO:0007669"/>
    <property type="project" value="UniProtKB-KW"/>
</dbReference>
<dbReference type="GO" id="GO:0008564">
    <property type="term" value="F:protein-exporting ATPase activity"/>
    <property type="evidence" value="ECO:0007669"/>
    <property type="project" value="UniProtKB-EC"/>
</dbReference>
<dbReference type="GO" id="GO:0065002">
    <property type="term" value="P:intracellular protein transmembrane transport"/>
    <property type="evidence" value="ECO:0007669"/>
    <property type="project" value="UniProtKB-UniRule"/>
</dbReference>
<dbReference type="GO" id="GO:0017038">
    <property type="term" value="P:protein import"/>
    <property type="evidence" value="ECO:0007669"/>
    <property type="project" value="InterPro"/>
</dbReference>
<dbReference type="GO" id="GO:0006605">
    <property type="term" value="P:protein targeting"/>
    <property type="evidence" value="ECO:0007669"/>
    <property type="project" value="UniProtKB-UniRule"/>
</dbReference>
<dbReference type="GO" id="GO:0043952">
    <property type="term" value="P:protein transport by the Sec complex"/>
    <property type="evidence" value="ECO:0007669"/>
    <property type="project" value="TreeGrafter"/>
</dbReference>
<dbReference type="CDD" id="cd17928">
    <property type="entry name" value="DEXDc_SecA"/>
    <property type="match status" value="1"/>
</dbReference>
<dbReference type="CDD" id="cd18803">
    <property type="entry name" value="SF2_C_secA"/>
    <property type="match status" value="1"/>
</dbReference>
<dbReference type="FunFam" id="3.40.50.300:FF:000113">
    <property type="entry name" value="Preprotein translocase subunit SecA"/>
    <property type="match status" value="1"/>
</dbReference>
<dbReference type="FunFam" id="3.90.1440.10:FF:000001">
    <property type="entry name" value="Preprotein translocase subunit SecA"/>
    <property type="match status" value="1"/>
</dbReference>
<dbReference type="FunFam" id="1.10.3060.10:FF:000003">
    <property type="entry name" value="Protein translocase subunit SecA"/>
    <property type="match status" value="1"/>
</dbReference>
<dbReference type="FunFam" id="3.40.50.300:FF:000334">
    <property type="entry name" value="Protein translocase subunit SecA"/>
    <property type="match status" value="1"/>
</dbReference>
<dbReference type="Gene3D" id="1.10.3060.10">
    <property type="entry name" value="Helical scaffold and wing domains of SecA"/>
    <property type="match status" value="1"/>
</dbReference>
<dbReference type="Gene3D" id="3.40.50.300">
    <property type="entry name" value="P-loop containing nucleotide triphosphate hydrolases"/>
    <property type="match status" value="2"/>
</dbReference>
<dbReference type="Gene3D" id="3.90.1440.10">
    <property type="entry name" value="SecA, preprotein cross-linking domain"/>
    <property type="match status" value="1"/>
</dbReference>
<dbReference type="HAMAP" id="MF_01382">
    <property type="entry name" value="SecA"/>
    <property type="match status" value="1"/>
</dbReference>
<dbReference type="InterPro" id="IPR014001">
    <property type="entry name" value="Helicase_ATP-bd"/>
</dbReference>
<dbReference type="InterPro" id="IPR001650">
    <property type="entry name" value="Helicase_C-like"/>
</dbReference>
<dbReference type="InterPro" id="IPR027417">
    <property type="entry name" value="P-loop_NTPase"/>
</dbReference>
<dbReference type="InterPro" id="IPR004027">
    <property type="entry name" value="SEC_C_motif"/>
</dbReference>
<dbReference type="InterPro" id="IPR000185">
    <property type="entry name" value="SecA"/>
</dbReference>
<dbReference type="InterPro" id="IPR020937">
    <property type="entry name" value="SecA_CS"/>
</dbReference>
<dbReference type="InterPro" id="IPR011115">
    <property type="entry name" value="SecA_DEAD"/>
</dbReference>
<dbReference type="InterPro" id="IPR014018">
    <property type="entry name" value="SecA_motor_DEAD"/>
</dbReference>
<dbReference type="InterPro" id="IPR011130">
    <property type="entry name" value="SecA_preprotein_X-link_dom"/>
</dbReference>
<dbReference type="InterPro" id="IPR044722">
    <property type="entry name" value="SecA_SF2_C"/>
</dbReference>
<dbReference type="InterPro" id="IPR011116">
    <property type="entry name" value="SecA_Wing/Scaffold"/>
</dbReference>
<dbReference type="InterPro" id="IPR036266">
    <property type="entry name" value="SecA_Wing/Scaffold_sf"/>
</dbReference>
<dbReference type="InterPro" id="IPR036670">
    <property type="entry name" value="SecA_X-link_sf"/>
</dbReference>
<dbReference type="NCBIfam" id="NF009538">
    <property type="entry name" value="PRK12904.1"/>
    <property type="match status" value="1"/>
</dbReference>
<dbReference type="NCBIfam" id="TIGR00963">
    <property type="entry name" value="secA"/>
    <property type="match status" value="1"/>
</dbReference>
<dbReference type="PANTHER" id="PTHR30612:SF0">
    <property type="entry name" value="CHLOROPLAST PROTEIN-TRANSPORTING ATPASE"/>
    <property type="match status" value="1"/>
</dbReference>
<dbReference type="PANTHER" id="PTHR30612">
    <property type="entry name" value="SECA INNER MEMBRANE COMPONENT OF SEC PROTEIN SECRETION SYSTEM"/>
    <property type="match status" value="1"/>
</dbReference>
<dbReference type="Pfam" id="PF21090">
    <property type="entry name" value="P-loop_SecA"/>
    <property type="match status" value="1"/>
</dbReference>
<dbReference type="Pfam" id="PF02810">
    <property type="entry name" value="SEC-C"/>
    <property type="match status" value="1"/>
</dbReference>
<dbReference type="Pfam" id="PF07517">
    <property type="entry name" value="SecA_DEAD"/>
    <property type="match status" value="1"/>
</dbReference>
<dbReference type="Pfam" id="PF01043">
    <property type="entry name" value="SecA_PP_bind"/>
    <property type="match status" value="1"/>
</dbReference>
<dbReference type="Pfam" id="PF07516">
    <property type="entry name" value="SecA_SW"/>
    <property type="match status" value="1"/>
</dbReference>
<dbReference type="PRINTS" id="PR00906">
    <property type="entry name" value="SECA"/>
</dbReference>
<dbReference type="SMART" id="SM00957">
    <property type="entry name" value="SecA_DEAD"/>
    <property type="match status" value="1"/>
</dbReference>
<dbReference type="SMART" id="SM00958">
    <property type="entry name" value="SecA_PP_bind"/>
    <property type="match status" value="1"/>
</dbReference>
<dbReference type="SUPFAM" id="SSF81886">
    <property type="entry name" value="Helical scaffold and wing domains of SecA"/>
    <property type="match status" value="1"/>
</dbReference>
<dbReference type="SUPFAM" id="SSF52540">
    <property type="entry name" value="P-loop containing nucleoside triphosphate hydrolases"/>
    <property type="match status" value="2"/>
</dbReference>
<dbReference type="SUPFAM" id="SSF81767">
    <property type="entry name" value="Pre-protein crosslinking domain of SecA"/>
    <property type="match status" value="1"/>
</dbReference>
<dbReference type="PROSITE" id="PS01312">
    <property type="entry name" value="SECA"/>
    <property type="match status" value="1"/>
</dbReference>
<dbReference type="PROSITE" id="PS51196">
    <property type="entry name" value="SECA_MOTOR_DEAD"/>
    <property type="match status" value="1"/>
</dbReference>
<evidence type="ECO:0000255" key="1">
    <source>
        <dbReference type="HAMAP-Rule" id="MF_01382"/>
    </source>
</evidence>
<keyword id="KW-0067">ATP-binding</keyword>
<keyword id="KW-0997">Cell inner membrane</keyword>
<keyword id="KW-1003">Cell membrane</keyword>
<keyword id="KW-0963">Cytoplasm</keyword>
<keyword id="KW-0472">Membrane</keyword>
<keyword id="KW-0479">Metal-binding</keyword>
<keyword id="KW-0547">Nucleotide-binding</keyword>
<keyword id="KW-0653">Protein transport</keyword>
<keyword id="KW-1185">Reference proteome</keyword>
<keyword id="KW-1278">Translocase</keyword>
<keyword id="KW-0811">Translocation</keyword>
<keyword id="KW-0813">Transport</keyword>
<keyword id="KW-0862">Zinc</keyword>
<feature type="chain" id="PRO_0000320910" description="Protein translocase subunit SecA">
    <location>
        <begin position="1"/>
        <end position="925"/>
    </location>
</feature>
<feature type="binding site" evidence="1">
    <location>
        <position position="87"/>
    </location>
    <ligand>
        <name>ATP</name>
        <dbReference type="ChEBI" id="CHEBI:30616"/>
    </ligand>
</feature>
<feature type="binding site" evidence="1">
    <location>
        <begin position="105"/>
        <end position="109"/>
    </location>
    <ligand>
        <name>ATP</name>
        <dbReference type="ChEBI" id="CHEBI:30616"/>
    </ligand>
</feature>
<feature type="binding site" evidence="1">
    <location>
        <position position="515"/>
    </location>
    <ligand>
        <name>ATP</name>
        <dbReference type="ChEBI" id="CHEBI:30616"/>
    </ligand>
</feature>
<feature type="binding site" evidence="1">
    <location>
        <position position="909"/>
    </location>
    <ligand>
        <name>Zn(2+)</name>
        <dbReference type="ChEBI" id="CHEBI:29105"/>
    </ligand>
</feature>
<feature type="binding site" evidence="1">
    <location>
        <position position="911"/>
    </location>
    <ligand>
        <name>Zn(2+)</name>
        <dbReference type="ChEBI" id="CHEBI:29105"/>
    </ligand>
</feature>
<feature type="binding site" evidence="1">
    <location>
        <position position="920"/>
    </location>
    <ligand>
        <name>Zn(2+)</name>
        <dbReference type="ChEBI" id="CHEBI:29105"/>
    </ligand>
</feature>
<feature type="binding site" evidence="1">
    <location>
        <position position="921"/>
    </location>
    <ligand>
        <name>Zn(2+)</name>
        <dbReference type="ChEBI" id="CHEBI:29105"/>
    </ligand>
</feature>
<reference key="1">
    <citation type="journal article" date="2006" name="Nat. Biotechnol.">
        <title>Genome sequence of the bioplastic-producing 'Knallgas' bacterium Ralstonia eutropha H16.</title>
        <authorList>
            <person name="Pohlmann A."/>
            <person name="Fricke W.F."/>
            <person name="Reinecke F."/>
            <person name="Kusian B."/>
            <person name="Liesegang H."/>
            <person name="Cramm R."/>
            <person name="Eitinger T."/>
            <person name="Ewering C."/>
            <person name="Poetter M."/>
            <person name="Schwartz E."/>
            <person name="Strittmatter A."/>
            <person name="Voss I."/>
            <person name="Gottschalk G."/>
            <person name="Steinbuechel A."/>
            <person name="Friedrich B."/>
            <person name="Bowien B."/>
        </authorList>
    </citation>
    <scope>NUCLEOTIDE SEQUENCE [LARGE SCALE GENOMIC DNA]</scope>
    <source>
        <strain>ATCC 17699 / DSM 428 / KCTC 22496 / NCIMB 10442 / H16 / Stanier 337</strain>
    </source>
</reference>
<protein>
    <recommendedName>
        <fullName evidence="1">Protein translocase subunit SecA</fullName>
        <ecNumber evidence="1">7.4.2.8</ecNumber>
    </recommendedName>
</protein>
<gene>
    <name evidence="1" type="primary">secA</name>
    <name type="ordered locus">H16_A3264</name>
</gene>
<comment type="function">
    <text evidence="1">Part of the Sec protein translocase complex. Interacts with the SecYEG preprotein conducting channel. Has a central role in coupling the hydrolysis of ATP to the transfer of proteins into and across the cell membrane, serving both as a receptor for the preprotein-SecB complex and as an ATP-driven molecular motor driving the stepwise translocation of polypeptide chains across the membrane.</text>
</comment>
<comment type="catalytic activity">
    <reaction evidence="1">
        <text>ATP + H2O + cellular proteinSide 1 = ADP + phosphate + cellular proteinSide 2.</text>
        <dbReference type="EC" id="7.4.2.8"/>
    </reaction>
</comment>
<comment type="cofactor">
    <cofactor evidence="1">
        <name>Zn(2+)</name>
        <dbReference type="ChEBI" id="CHEBI:29105"/>
    </cofactor>
    <text evidence="1">May bind 1 zinc ion per subunit.</text>
</comment>
<comment type="subunit">
    <text evidence="1">Monomer and homodimer. Part of the essential Sec protein translocation apparatus which comprises SecA, SecYEG and auxiliary proteins SecDF-YajC and YidC.</text>
</comment>
<comment type="subcellular location">
    <subcellularLocation>
        <location evidence="1">Cell inner membrane</location>
        <topology evidence="1">Peripheral membrane protein</topology>
        <orientation evidence="1">Cytoplasmic side</orientation>
    </subcellularLocation>
    <subcellularLocation>
        <location evidence="1">Cytoplasm</location>
    </subcellularLocation>
    <text evidence="1">Distribution is 50-50.</text>
</comment>
<comment type="similarity">
    <text evidence="1">Belongs to the SecA family.</text>
</comment>
<proteinExistence type="inferred from homology"/>
<organism>
    <name type="scientific">Cupriavidus necator (strain ATCC 17699 / DSM 428 / KCTC 22496 / NCIMB 10442 / H16 / Stanier 337)</name>
    <name type="common">Ralstonia eutropha</name>
    <dbReference type="NCBI Taxonomy" id="381666"/>
    <lineage>
        <taxon>Bacteria</taxon>
        <taxon>Pseudomonadati</taxon>
        <taxon>Pseudomonadota</taxon>
        <taxon>Betaproteobacteria</taxon>
        <taxon>Burkholderiales</taxon>
        <taxon>Burkholderiaceae</taxon>
        <taxon>Cupriavidus</taxon>
    </lineage>
</organism>